<name>HIS1_CUPPJ</name>
<dbReference type="EC" id="2.4.2.17" evidence="1"/>
<dbReference type="EMBL" id="CP000090">
    <property type="protein sequence ID" value="AAZ62472.1"/>
    <property type="molecule type" value="Genomic_DNA"/>
</dbReference>
<dbReference type="SMR" id="Q46WL1"/>
<dbReference type="STRING" id="264198.Reut_A3112"/>
<dbReference type="KEGG" id="reu:Reut_A3112"/>
<dbReference type="eggNOG" id="COG0040">
    <property type="taxonomic scope" value="Bacteria"/>
</dbReference>
<dbReference type="HOGENOM" id="CLU_038115_2_0_4"/>
<dbReference type="OrthoDB" id="9801867at2"/>
<dbReference type="UniPathway" id="UPA00031">
    <property type="reaction ID" value="UER00006"/>
</dbReference>
<dbReference type="GO" id="GO:0005737">
    <property type="term" value="C:cytoplasm"/>
    <property type="evidence" value="ECO:0007669"/>
    <property type="project" value="UniProtKB-SubCell"/>
</dbReference>
<dbReference type="GO" id="GO:0005524">
    <property type="term" value="F:ATP binding"/>
    <property type="evidence" value="ECO:0007669"/>
    <property type="project" value="UniProtKB-KW"/>
</dbReference>
<dbReference type="GO" id="GO:0003879">
    <property type="term" value="F:ATP phosphoribosyltransferase activity"/>
    <property type="evidence" value="ECO:0007669"/>
    <property type="project" value="UniProtKB-UniRule"/>
</dbReference>
<dbReference type="GO" id="GO:0000105">
    <property type="term" value="P:L-histidine biosynthetic process"/>
    <property type="evidence" value="ECO:0007669"/>
    <property type="project" value="UniProtKB-UniRule"/>
</dbReference>
<dbReference type="CDD" id="cd13595">
    <property type="entry name" value="PBP2_HisGs"/>
    <property type="match status" value="1"/>
</dbReference>
<dbReference type="FunFam" id="3.40.190.10:FF:000011">
    <property type="entry name" value="ATP phosphoribosyltransferase"/>
    <property type="match status" value="1"/>
</dbReference>
<dbReference type="Gene3D" id="3.40.190.10">
    <property type="entry name" value="Periplasmic binding protein-like II"/>
    <property type="match status" value="2"/>
</dbReference>
<dbReference type="HAMAP" id="MF_01018">
    <property type="entry name" value="HisG_Short"/>
    <property type="match status" value="1"/>
</dbReference>
<dbReference type="InterPro" id="IPR013820">
    <property type="entry name" value="ATP_PRibTrfase_cat"/>
</dbReference>
<dbReference type="InterPro" id="IPR018198">
    <property type="entry name" value="ATP_PRibTrfase_CS"/>
</dbReference>
<dbReference type="InterPro" id="IPR001348">
    <property type="entry name" value="ATP_PRibTrfase_HisG"/>
</dbReference>
<dbReference type="InterPro" id="IPR024893">
    <property type="entry name" value="ATP_PRibTrfase_HisG_short"/>
</dbReference>
<dbReference type="NCBIfam" id="TIGR00070">
    <property type="entry name" value="hisG"/>
    <property type="match status" value="1"/>
</dbReference>
<dbReference type="PANTHER" id="PTHR21403:SF8">
    <property type="entry name" value="ATP PHOSPHORIBOSYLTRANSFERASE"/>
    <property type="match status" value="1"/>
</dbReference>
<dbReference type="PANTHER" id="PTHR21403">
    <property type="entry name" value="ATP PHOSPHORIBOSYLTRANSFERASE ATP-PRTASE"/>
    <property type="match status" value="1"/>
</dbReference>
<dbReference type="Pfam" id="PF01634">
    <property type="entry name" value="HisG"/>
    <property type="match status" value="1"/>
</dbReference>
<dbReference type="SUPFAM" id="SSF53850">
    <property type="entry name" value="Periplasmic binding protein-like II"/>
    <property type="match status" value="1"/>
</dbReference>
<dbReference type="PROSITE" id="PS01316">
    <property type="entry name" value="ATP_P_PHORIBOSYLTR"/>
    <property type="match status" value="1"/>
</dbReference>
<keyword id="KW-0028">Amino-acid biosynthesis</keyword>
<keyword id="KW-0067">ATP-binding</keyword>
<keyword id="KW-0963">Cytoplasm</keyword>
<keyword id="KW-0328">Glycosyltransferase</keyword>
<keyword id="KW-0368">Histidine biosynthesis</keyword>
<keyword id="KW-0547">Nucleotide-binding</keyword>
<keyword id="KW-0808">Transferase</keyword>
<proteinExistence type="inferred from homology"/>
<gene>
    <name evidence="1" type="primary">hisG</name>
    <name type="ordered locus">Reut_A3112</name>
</gene>
<evidence type="ECO:0000255" key="1">
    <source>
        <dbReference type="HAMAP-Rule" id="MF_01018"/>
    </source>
</evidence>
<accession>Q46WL1</accession>
<feature type="chain" id="PRO_0000229331" description="ATP phosphoribosyltransferase">
    <location>
        <begin position="1"/>
        <end position="224"/>
    </location>
</feature>
<reference key="1">
    <citation type="journal article" date="2010" name="PLoS ONE">
        <title>The complete multipartite genome sequence of Cupriavidus necator JMP134, a versatile pollutant degrader.</title>
        <authorList>
            <person name="Lykidis A."/>
            <person name="Perez-Pantoja D."/>
            <person name="Ledger T."/>
            <person name="Mavromatis K."/>
            <person name="Anderson I.J."/>
            <person name="Ivanova N.N."/>
            <person name="Hooper S.D."/>
            <person name="Lapidus A."/>
            <person name="Lucas S."/>
            <person name="Gonzalez B."/>
            <person name="Kyrpides N.C."/>
        </authorList>
    </citation>
    <scope>NUCLEOTIDE SEQUENCE [LARGE SCALE GENOMIC DNA]</scope>
    <source>
        <strain>JMP134 / LMG 1197</strain>
    </source>
</reference>
<organism>
    <name type="scientific">Cupriavidus pinatubonensis (strain JMP 134 / LMG 1197)</name>
    <name type="common">Cupriavidus necator (strain JMP 134)</name>
    <dbReference type="NCBI Taxonomy" id="264198"/>
    <lineage>
        <taxon>Bacteria</taxon>
        <taxon>Pseudomonadati</taxon>
        <taxon>Pseudomonadota</taxon>
        <taxon>Betaproteobacteria</taxon>
        <taxon>Burkholderiales</taxon>
        <taxon>Burkholderiaceae</taxon>
        <taxon>Cupriavidus</taxon>
    </lineage>
</organism>
<sequence length="224" mass="24058">MSPAFNASPNQLTLALSKGRIFKETLPLLEAAGIRVMEDPETSRKLILPTSDPAVRVIIVRASDVPTYVQYGAADFGVAGKDVLMEHGMTGLYAPIDLNIARCRMSVAVPAGFDYANAVRQGARLSVATKYVQTAREHFAKKGVHVDLIKLYGSMELGPLVGLSDAIVDLVSTGGTLRANNLVEVEEIVQISSRLVVNQAALKLKRERLTPILDAFEKASAALA</sequence>
<comment type="function">
    <text evidence="1">Catalyzes the condensation of ATP and 5-phosphoribose 1-diphosphate to form N'-(5'-phosphoribosyl)-ATP (PR-ATP). Has a crucial role in the pathway because the rate of histidine biosynthesis seems to be controlled primarily by regulation of HisG enzymatic activity.</text>
</comment>
<comment type="catalytic activity">
    <reaction evidence="1">
        <text>1-(5-phospho-beta-D-ribosyl)-ATP + diphosphate = 5-phospho-alpha-D-ribose 1-diphosphate + ATP</text>
        <dbReference type="Rhea" id="RHEA:18473"/>
        <dbReference type="ChEBI" id="CHEBI:30616"/>
        <dbReference type="ChEBI" id="CHEBI:33019"/>
        <dbReference type="ChEBI" id="CHEBI:58017"/>
        <dbReference type="ChEBI" id="CHEBI:73183"/>
        <dbReference type="EC" id="2.4.2.17"/>
    </reaction>
</comment>
<comment type="pathway">
    <text evidence="1">Amino-acid biosynthesis; L-histidine biosynthesis; L-histidine from 5-phospho-alpha-D-ribose 1-diphosphate: step 1/9.</text>
</comment>
<comment type="subunit">
    <text evidence="1">Heteromultimer composed of HisG and HisZ subunits.</text>
</comment>
<comment type="subcellular location">
    <subcellularLocation>
        <location evidence="1">Cytoplasm</location>
    </subcellularLocation>
</comment>
<comment type="domain">
    <text>Lacks the C-terminal regulatory region which is replaced by HisZ.</text>
</comment>
<comment type="similarity">
    <text evidence="1">Belongs to the ATP phosphoribosyltransferase family. Short subfamily.</text>
</comment>
<protein>
    <recommendedName>
        <fullName evidence="1">ATP phosphoribosyltransferase</fullName>
        <shortName evidence="1">ATP-PRT</shortName>
        <shortName evidence="1">ATP-PRTase</shortName>
        <ecNumber evidence="1">2.4.2.17</ecNumber>
    </recommendedName>
</protein>